<keyword id="KW-0274">FAD</keyword>
<keyword id="KW-0285">Flavoprotein</keyword>
<keyword id="KW-0560">Oxidoreductase</keyword>
<reference key="1">
    <citation type="journal article" date="2008" name="Microbiology">
        <title>Determination of a transcriptional regulator-like gene involved in biosynthesis of elsinochrome phytotoxin by the citrus scab fungus, Elsinoe fawcettii.</title>
        <authorList>
            <person name="Chung K.R."/>
            <person name="Liao H.L."/>
        </authorList>
    </citation>
    <scope>NUCLEOTIDE SEQUENCE [GENOMIC DNA]</scope>
    <scope>IDENTIFICATION</scope>
    <scope>FUNCTION</scope>
    <scope>INDUCTION</scope>
</reference>
<reference key="2">
    <citation type="journal article" date="2011" name="Mol. Plant Pathol.">
        <title>Elsinoe fawcettii and Elsinoe australis: the fungal pathogens causing citrus scab.</title>
        <authorList>
            <person name="Chung K.R."/>
        </authorList>
    </citation>
    <scope>REVIEW</scope>
</reference>
<feature type="chain" id="PRO_0000445823" description="Oxidoreductase 1">
    <location>
        <begin position="1"/>
        <end position="232"/>
    </location>
</feature>
<accession>B0ZT46</accession>
<sequence>MSGRRRRLTESVSTRVGSYHVADAVALQREGAAMVVGIDILLTWNGSLPFSLGDLRFLHCVRSERRSCGKSLPGMNSSRVNMAETSGISAFTQFWGCIRLDGSCEVTRRPAMDLHGHHYREAYLQPAIMDGPCTGASSSARGRDGKKALIHRLLAALCPVRCPAKISGSSVRPMLAASRISGPVRSFIASCRRQDEQMNGRSQMRDCARRAFLPLRVSDARSEWICFIVAIW</sequence>
<protein>
    <recommendedName>
        <fullName evidence="3">Oxidoreductase 1</fullName>
        <ecNumber evidence="6">1.1.-.-</ecNumber>
    </recommendedName>
    <alternativeName>
        <fullName evidence="3">Elsinochromes biosynthesis cluster protein TSF1</fullName>
    </alternativeName>
</protein>
<comment type="function">
    <text evidence="2 4">Oxidoreductase; part of the gene cluster that mediates the biosynthesis of elsinochromes, pigments consisting of at least four interconvertible tautomers (A, B, C and D) that have a core phenolic quinone to which various side chains are attached and which play an important role in fungal pathogenesis (PubMed:18957608). The non-reducing polyketide synthase PKS1 was proposed to iteratively catalyze decarboxylation between acetyl-CoA and malonyl-CoA subunits for polyketide chain elongation. The released polyketide undergoes cyclization to form an aromatic ring, and proceeds via serial modification steps to produce the heptaketide back- bone of elsinochrome. As elsinochrome has a symmetrical structure, two identical heptaketides are fused to form a core 1,2-dihydrobenzo-perylene ring structure, which can then be successively modified to produce the various derivatives of elsinochrome. Some of these reactions may be cooperatively carried out, at least in part, by the products of RDT1, OXR1 and PKS1. PRF1, embedded within the elsinochrome cluster possibly functions to stabilize some of the biosynthetic enzymes required for elsinochrome production. As prefoldin is a hexamer containing 2 a and 4 b subunits, additional prefoldin subunits, whose coding genes may not immediately link to the elsinochrome biosynthetic gene cluster, are required to fulfill the chaperone function. In addition, no methyltransferase-coding gene exists within the biosynthetic gene cluster, even though elsinochrome has four methyl groups at positions C3, C7, C8 and C12. Apparently, the identified gene cluster does not contain the entire entourage of genes responsible for elsinochrome biosynthesis. Once elsinochrome is synthesized, it must be exported outside the fungal cells, which is probably accomplished by the ECT1 transporter, to avoid toxicity (PubMed:21199563).</text>
</comment>
<comment type="cofactor">
    <cofactor evidence="1">
        <name>FAD</name>
        <dbReference type="ChEBI" id="CHEBI:57692"/>
    </cofactor>
</comment>
<comment type="induction">
    <text evidence="2">Expression is up-regulated in the presence of large amounts of glucose and during nitrogen starvation, conditions highly conducive to elsinochrome accumulation.</text>
</comment>
<comment type="similarity">
    <text evidence="5">Belongs to the MQO family.</text>
</comment>
<organism>
    <name type="scientific">Elsinoe fawcettii</name>
    <name type="common">Citrus scab fungus</name>
    <name type="synonym">Sphaceloma fawcettii</name>
    <dbReference type="NCBI Taxonomy" id="40997"/>
    <lineage>
        <taxon>Eukaryota</taxon>
        <taxon>Fungi</taxon>
        <taxon>Dikarya</taxon>
        <taxon>Ascomycota</taxon>
        <taxon>Pezizomycotina</taxon>
        <taxon>Dothideomycetes</taxon>
        <taxon>Dothideomycetidae</taxon>
        <taxon>Myriangiales</taxon>
        <taxon>Elsinoaceae</taxon>
        <taxon>Elsinoe</taxon>
    </lineage>
</organism>
<evidence type="ECO:0000250" key="1">
    <source>
        <dbReference type="UniProtKB" id="Q887Z4"/>
    </source>
</evidence>
<evidence type="ECO:0000269" key="2">
    <source>
    </source>
</evidence>
<evidence type="ECO:0000303" key="3">
    <source>
    </source>
</evidence>
<evidence type="ECO:0000303" key="4">
    <source>
    </source>
</evidence>
<evidence type="ECO:0000305" key="5"/>
<evidence type="ECO:0000305" key="6">
    <source>
    </source>
</evidence>
<gene>
    <name evidence="3" type="primary">OXR1</name>
</gene>
<proteinExistence type="evidence at transcript level"/>
<name>OXR1_ELSFA</name>
<dbReference type="EC" id="1.1.-.-" evidence="6"/>
<dbReference type="EMBL" id="EU401706">
    <property type="protein sequence ID" value="ABZ01832.1"/>
    <property type="molecule type" value="Genomic_DNA"/>
</dbReference>
<dbReference type="SMR" id="B0ZT46"/>
<dbReference type="GO" id="GO:0016491">
    <property type="term" value="F:oxidoreductase activity"/>
    <property type="evidence" value="ECO:0007669"/>
    <property type="project" value="UniProtKB-KW"/>
</dbReference>